<dbReference type="EC" id="4.1.1.19" evidence="1"/>
<dbReference type="EMBL" id="AE017220">
    <property type="protein sequence ID" value="AAX66932.1"/>
    <property type="molecule type" value="Genomic_DNA"/>
</dbReference>
<dbReference type="SMR" id="Q57K30"/>
<dbReference type="KEGG" id="sec:SCH_3026"/>
<dbReference type="HOGENOM" id="CLU_027243_1_0_6"/>
<dbReference type="UniPathway" id="UPA00186">
    <property type="reaction ID" value="UER00284"/>
</dbReference>
<dbReference type="Proteomes" id="UP000000538">
    <property type="component" value="Chromosome"/>
</dbReference>
<dbReference type="GO" id="GO:0008792">
    <property type="term" value="F:arginine decarboxylase activity"/>
    <property type="evidence" value="ECO:0007669"/>
    <property type="project" value="UniProtKB-UniRule"/>
</dbReference>
<dbReference type="GO" id="GO:0046872">
    <property type="term" value="F:metal ion binding"/>
    <property type="evidence" value="ECO:0007669"/>
    <property type="project" value="UniProtKB-KW"/>
</dbReference>
<dbReference type="GO" id="GO:0006527">
    <property type="term" value="P:arginine catabolic process"/>
    <property type="evidence" value="ECO:0007669"/>
    <property type="project" value="InterPro"/>
</dbReference>
<dbReference type="GO" id="GO:0033388">
    <property type="term" value="P:putrescine biosynthetic process from arginine"/>
    <property type="evidence" value="ECO:0007669"/>
    <property type="project" value="TreeGrafter"/>
</dbReference>
<dbReference type="GO" id="GO:0008295">
    <property type="term" value="P:spermidine biosynthetic process"/>
    <property type="evidence" value="ECO:0007669"/>
    <property type="project" value="UniProtKB-UniRule"/>
</dbReference>
<dbReference type="CDD" id="cd06830">
    <property type="entry name" value="PLPDE_III_ADC"/>
    <property type="match status" value="1"/>
</dbReference>
<dbReference type="FunFam" id="1.10.287.3440:FF:000001">
    <property type="entry name" value="Biosynthetic arginine decarboxylase"/>
    <property type="match status" value="1"/>
</dbReference>
<dbReference type="FunFam" id="1.20.58.930:FF:000001">
    <property type="entry name" value="Biosynthetic arginine decarboxylase"/>
    <property type="match status" value="1"/>
</dbReference>
<dbReference type="FunFam" id="2.40.37.10:FF:000001">
    <property type="entry name" value="Biosynthetic arginine decarboxylase"/>
    <property type="match status" value="1"/>
</dbReference>
<dbReference type="FunFam" id="3.20.20.10:FF:000001">
    <property type="entry name" value="Biosynthetic arginine decarboxylase"/>
    <property type="match status" value="1"/>
</dbReference>
<dbReference type="Gene3D" id="1.10.287.3440">
    <property type="match status" value="1"/>
</dbReference>
<dbReference type="Gene3D" id="1.20.58.930">
    <property type="match status" value="1"/>
</dbReference>
<dbReference type="Gene3D" id="3.20.20.10">
    <property type="entry name" value="Alanine racemase"/>
    <property type="match status" value="1"/>
</dbReference>
<dbReference type="Gene3D" id="2.40.37.10">
    <property type="entry name" value="Lyase, Ornithine Decarboxylase, Chain A, domain 1"/>
    <property type="match status" value="1"/>
</dbReference>
<dbReference type="HAMAP" id="MF_01417">
    <property type="entry name" value="SpeA"/>
    <property type="match status" value="1"/>
</dbReference>
<dbReference type="InterPro" id="IPR009006">
    <property type="entry name" value="Ala_racemase/Decarboxylase_C"/>
</dbReference>
<dbReference type="InterPro" id="IPR040634">
    <property type="entry name" value="Arg_decarb_HB"/>
</dbReference>
<dbReference type="InterPro" id="IPR041128">
    <property type="entry name" value="Arg_decarbox_C"/>
</dbReference>
<dbReference type="InterPro" id="IPR002985">
    <property type="entry name" value="Arg_decrbxlase"/>
</dbReference>
<dbReference type="InterPro" id="IPR022657">
    <property type="entry name" value="De-COase2_CS"/>
</dbReference>
<dbReference type="InterPro" id="IPR022644">
    <property type="entry name" value="De-COase2_N"/>
</dbReference>
<dbReference type="InterPro" id="IPR022653">
    <property type="entry name" value="De-COase2_pyr-phos_BS"/>
</dbReference>
<dbReference type="InterPro" id="IPR000183">
    <property type="entry name" value="Orn/DAP/Arg_de-COase"/>
</dbReference>
<dbReference type="InterPro" id="IPR029066">
    <property type="entry name" value="PLP-binding_barrel"/>
</dbReference>
<dbReference type="NCBIfam" id="NF003763">
    <property type="entry name" value="PRK05354.1"/>
    <property type="match status" value="1"/>
</dbReference>
<dbReference type="NCBIfam" id="TIGR01273">
    <property type="entry name" value="speA"/>
    <property type="match status" value="1"/>
</dbReference>
<dbReference type="PANTHER" id="PTHR43295">
    <property type="entry name" value="ARGININE DECARBOXYLASE"/>
    <property type="match status" value="1"/>
</dbReference>
<dbReference type="PANTHER" id="PTHR43295:SF9">
    <property type="entry name" value="BIOSYNTHETIC ARGININE DECARBOXYLASE"/>
    <property type="match status" value="1"/>
</dbReference>
<dbReference type="Pfam" id="PF17810">
    <property type="entry name" value="Arg_decarb_HB"/>
    <property type="match status" value="1"/>
</dbReference>
<dbReference type="Pfam" id="PF17944">
    <property type="entry name" value="Arg_decarbox_C"/>
    <property type="match status" value="1"/>
</dbReference>
<dbReference type="Pfam" id="PF02784">
    <property type="entry name" value="Orn_Arg_deC_N"/>
    <property type="match status" value="1"/>
</dbReference>
<dbReference type="PIRSF" id="PIRSF001336">
    <property type="entry name" value="Arg_decrbxlase"/>
    <property type="match status" value="1"/>
</dbReference>
<dbReference type="PRINTS" id="PR01180">
    <property type="entry name" value="ARGDCRBXLASE"/>
</dbReference>
<dbReference type="PRINTS" id="PR01179">
    <property type="entry name" value="ODADCRBXLASE"/>
</dbReference>
<dbReference type="SUPFAM" id="SSF50621">
    <property type="entry name" value="Alanine racemase C-terminal domain-like"/>
    <property type="match status" value="1"/>
</dbReference>
<dbReference type="SUPFAM" id="SSF51419">
    <property type="entry name" value="PLP-binding barrel"/>
    <property type="match status" value="1"/>
</dbReference>
<dbReference type="PROSITE" id="PS00878">
    <property type="entry name" value="ODR_DC_2_1"/>
    <property type="match status" value="1"/>
</dbReference>
<dbReference type="PROSITE" id="PS00879">
    <property type="entry name" value="ODR_DC_2_2"/>
    <property type="match status" value="1"/>
</dbReference>
<organism>
    <name type="scientific">Salmonella choleraesuis (strain SC-B67)</name>
    <dbReference type="NCBI Taxonomy" id="321314"/>
    <lineage>
        <taxon>Bacteria</taxon>
        <taxon>Pseudomonadati</taxon>
        <taxon>Pseudomonadota</taxon>
        <taxon>Gammaproteobacteria</taxon>
        <taxon>Enterobacterales</taxon>
        <taxon>Enterobacteriaceae</taxon>
        <taxon>Salmonella</taxon>
    </lineage>
</organism>
<reference key="1">
    <citation type="journal article" date="2005" name="Nucleic Acids Res.">
        <title>The genome sequence of Salmonella enterica serovar Choleraesuis, a highly invasive and resistant zoonotic pathogen.</title>
        <authorList>
            <person name="Chiu C.-H."/>
            <person name="Tang P."/>
            <person name="Chu C."/>
            <person name="Hu S."/>
            <person name="Bao Q."/>
            <person name="Yu J."/>
            <person name="Chou Y.-Y."/>
            <person name="Wang H.-S."/>
            <person name="Lee Y.-S."/>
        </authorList>
    </citation>
    <scope>NUCLEOTIDE SEQUENCE [LARGE SCALE GENOMIC DNA]</scope>
    <source>
        <strain>SC-B67</strain>
    </source>
</reference>
<sequence>MSSQEASKMLRTYNIAWWGNNYYDVNELGHISVCPDPDVPEARVDLAKLVKAREAQGQRLPALFCFPQILQHRLRSINAAFKRARESYGYNGDYFLVYPIKVNQHRRVIESLIHSGEPLGLEAGSKAELMAVLAHAGMTRSVIVCNGYKDREYIRLALIGEKMGHKVYLVIEKMSEIAIVLEEAERLNVVPRLGVRARLASQGSGKWQSSGGEKSKFGLAATQVLQLVETLRDAGRLDSLQLLHFHLGSQMANIRDIATGVRESARFYVELHKLGVNIQCFDVGGGLGVDYEGTRSQSDCSVNYGLNEYANNIIWAIGDACEEHGLPHPTVITESGRAVTAHHTVLVSNIIGVERNEYTDPTAPAEDAPRALQNLWETWQEMHKPGTRRSLREWLHDSQMDLHDIHIGYSSGAFSLQERAWAEQLYLSMCHEVQKQLDPQNRAHRPIIDELQERMADKMYVNFSLFQSMPDAWGIDQLFPVLPLEGLDQVPERRAVLLDITCDSDGAIDHYIDGDGIATTMPMPEYDPENPPMLGFFMVGAYQEILGNMHNLFGDTEAVDVFVFPDGSVEVELSDEGDTVADMLQYVQLDPKTLLTHFRDQVKQTDLDDALQQQFLEEFEAGLYGYTYLEDE</sequence>
<evidence type="ECO:0000255" key="1">
    <source>
        <dbReference type="HAMAP-Rule" id="MF_01417"/>
    </source>
</evidence>
<protein>
    <recommendedName>
        <fullName evidence="1">Biosynthetic arginine decarboxylase</fullName>
        <shortName evidence="1">ADC</shortName>
        <ecNumber evidence="1">4.1.1.19</ecNumber>
    </recommendedName>
</protein>
<name>SPEA_SALCH</name>
<proteinExistence type="inferred from homology"/>
<keyword id="KW-0210">Decarboxylase</keyword>
<keyword id="KW-0456">Lyase</keyword>
<keyword id="KW-0460">Magnesium</keyword>
<keyword id="KW-0479">Metal-binding</keyword>
<keyword id="KW-0620">Polyamine biosynthesis</keyword>
<keyword id="KW-0661">Putrescine biosynthesis</keyword>
<keyword id="KW-0663">Pyridoxal phosphate</keyword>
<keyword id="KW-0745">Spermidine biosynthesis</keyword>
<accession>Q57K30</accession>
<feature type="chain" id="PRO_1000024263" description="Biosynthetic arginine decarboxylase">
    <location>
        <begin position="1"/>
        <end position="632"/>
    </location>
</feature>
<feature type="binding site" evidence="1">
    <location>
        <begin position="281"/>
        <end position="291"/>
    </location>
    <ligand>
        <name>substrate</name>
    </ligand>
</feature>
<feature type="modified residue" description="N6-(pyridoxal phosphate)lysine" evidence="1">
    <location>
        <position position="101"/>
    </location>
</feature>
<comment type="function">
    <text evidence="1">Catalyzes the biosynthesis of agmatine from arginine.</text>
</comment>
<comment type="catalytic activity">
    <reaction evidence="1">
        <text>L-arginine + H(+) = agmatine + CO2</text>
        <dbReference type="Rhea" id="RHEA:17641"/>
        <dbReference type="ChEBI" id="CHEBI:15378"/>
        <dbReference type="ChEBI" id="CHEBI:16526"/>
        <dbReference type="ChEBI" id="CHEBI:32682"/>
        <dbReference type="ChEBI" id="CHEBI:58145"/>
        <dbReference type="EC" id="4.1.1.19"/>
    </reaction>
</comment>
<comment type="cofactor">
    <cofactor evidence="1">
        <name>Mg(2+)</name>
        <dbReference type="ChEBI" id="CHEBI:18420"/>
    </cofactor>
</comment>
<comment type="cofactor">
    <cofactor evidence="1">
        <name>pyridoxal 5'-phosphate</name>
        <dbReference type="ChEBI" id="CHEBI:597326"/>
    </cofactor>
</comment>
<comment type="pathway">
    <text evidence="1">Amine and polyamine biosynthesis; agmatine biosynthesis; agmatine from L-arginine: step 1/1.</text>
</comment>
<comment type="similarity">
    <text evidence="1">Belongs to the Orn/Lys/Arg decarboxylase class-II family. SpeA subfamily.</text>
</comment>
<gene>
    <name evidence="1" type="primary">speA</name>
    <name type="ordered locus">SCH_3026</name>
</gene>